<proteinExistence type="evidence at protein level"/>
<comment type="function">
    <text evidence="1">Component of ribonuclease P, a ribonucleoprotein complex that generates mature tRNA molecules by cleaving their 5'-ends. Also a component of the MRP ribonuclease complex, which cleaves pre-rRNA sequences.</text>
</comment>
<comment type="subunit">
    <text evidence="1">Component of nuclear RNase P and RNase MRP ribonucleoproteins. RNase P consists of a catalytic RNA moiety and about 10 protein subunits; POP1, POP4, POP5, POP7, RPP14, RPP21, RPP25, RPP30, RPP38 and RPP40. Within the RNase P complex, POP1, POP7 and RPP25 form the 'finger' subcomplex, POP5, RPP14, RPP40 and homodimeric RPP30 form the 'palm' subcomplex, and RPP21, POP4 and RPP38 form the 'wrist' subcomplex. All subunits of the RNase P complex interact with the catalytic RNA. Several subunits of RNase P are also part of the RNase MRP complex. RNase MRP consists of a catalytic RNA moiety and about 8 protein subunits; POP1, POP7, RPP25, RPP30, RPP38, RPP40 and possibly also POP4 and POP5.</text>
</comment>
<comment type="subcellular location">
    <subcellularLocation>
        <location evidence="1">Nucleus</location>
        <location evidence="1">Nucleolus</location>
    </subcellularLocation>
</comment>
<comment type="similarity">
    <text evidence="3">Belongs to the eukaryotic ribosomal protein eL8 family.</text>
</comment>
<organism>
    <name type="scientific">Mus musculus</name>
    <name type="common">Mouse</name>
    <dbReference type="NCBI Taxonomy" id="10090"/>
    <lineage>
        <taxon>Eukaryota</taxon>
        <taxon>Metazoa</taxon>
        <taxon>Chordata</taxon>
        <taxon>Craniata</taxon>
        <taxon>Vertebrata</taxon>
        <taxon>Euteleostomi</taxon>
        <taxon>Mammalia</taxon>
        <taxon>Eutheria</taxon>
        <taxon>Euarchontoglires</taxon>
        <taxon>Glires</taxon>
        <taxon>Rodentia</taxon>
        <taxon>Myomorpha</taxon>
        <taxon>Muroidea</taxon>
        <taxon>Muridae</taxon>
        <taxon>Murinae</taxon>
        <taxon>Mus</taxon>
        <taxon>Mus</taxon>
    </lineage>
</organism>
<accession>Q80UU2</accession>
<accession>Q3UTW5</accession>
<accession>Q8BU46</accession>
<keyword id="KW-0007">Acetylation</keyword>
<keyword id="KW-0539">Nucleus</keyword>
<keyword id="KW-0597">Phosphoprotein</keyword>
<keyword id="KW-1185">Reference proteome</keyword>
<keyword id="KW-0698">rRNA processing</keyword>
<keyword id="KW-0819">tRNA processing</keyword>
<name>RPP38_MOUSE</name>
<feature type="initiator methionine" description="Removed" evidence="1">
    <location>
        <position position="1"/>
    </location>
</feature>
<feature type="chain" id="PRO_0000136784" description="Ribonuclease P protein subunit p38">
    <location>
        <begin position="2"/>
        <end position="280"/>
    </location>
</feature>
<feature type="region of interest" description="Disordered" evidence="2">
    <location>
        <begin position="202"/>
        <end position="227"/>
    </location>
</feature>
<feature type="region of interest" description="Disordered" evidence="2">
    <location>
        <begin position="254"/>
        <end position="280"/>
    </location>
</feature>
<feature type="compositionally biased region" description="Acidic residues" evidence="2">
    <location>
        <begin position="214"/>
        <end position="226"/>
    </location>
</feature>
<feature type="compositionally biased region" description="Basic residues" evidence="2">
    <location>
        <begin position="267"/>
        <end position="280"/>
    </location>
</feature>
<feature type="modified residue" description="N-acetylalanine" evidence="1">
    <location>
        <position position="2"/>
    </location>
</feature>
<feature type="modified residue" description="Phosphoserine" evidence="1">
    <location>
        <position position="12"/>
    </location>
</feature>
<feature type="modified residue" description="Phosphoserine" evidence="1">
    <location>
        <position position="221"/>
    </location>
</feature>
<feature type="modified residue" description="Phosphoserine" evidence="1">
    <location>
        <position position="230"/>
    </location>
</feature>
<feature type="sequence conflict" description="In Ref. 1; BAE23865." evidence="3" ref="1">
    <original>N</original>
    <variation>D</variation>
    <location>
        <position position="26"/>
    </location>
</feature>
<feature type="sequence conflict" description="In Ref. 1; BAE23865." evidence="3" ref="1">
    <original>Q</original>
    <variation>K</variation>
    <location>
        <position position="107"/>
    </location>
</feature>
<feature type="sequence conflict" description="In Ref. 1; BAC40000/BAE23865." evidence="3" ref="1">
    <original>S</original>
    <variation>F</variation>
    <location>
        <position position="177"/>
    </location>
</feature>
<protein>
    <recommendedName>
        <fullName>Ribonuclease P protein subunit p38</fullName>
        <shortName>RNaseP protein p38</shortName>
    </recommendedName>
</protein>
<sequence length="280" mass="31129">MAAAPQAPKRGSIRKTRPLVVKTSLNNPYVISWSTLEREDIHFILQTLEAKFKLIGLQKIEDKKKRKKTALMKKQSCRPDIEISEDPKEPDGDVLVSGWTPVHVRKQLVIGVNEVTRALERNELLLVLVCKSVKPAIITSHLIQLSLSRTVPACQVPQLSERIAPVIGLKCVLALGSRKNTRDFADEVEAIIPRVPSLNVPWLPDRTQGPTDSLETEPSESQDNEILDTSFDDLTKLSKRKLAEGGQASAATLQPLKIKKLIPNPSKIRKPPKSKKSISK</sequence>
<reference key="1">
    <citation type="journal article" date="2005" name="Science">
        <title>The transcriptional landscape of the mammalian genome.</title>
        <authorList>
            <person name="Carninci P."/>
            <person name="Kasukawa T."/>
            <person name="Katayama S."/>
            <person name="Gough J."/>
            <person name="Frith M.C."/>
            <person name="Maeda N."/>
            <person name="Oyama R."/>
            <person name="Ravasi T."/>
            <person name="Lenhard B."/>
            <person name="Wells C."/>
            <person name="Kodzius R."/>
            <person name="Shimokawa K."/>
            <person name="Bajic V.B."/>
            <person name="Brenner S.E."/>
            <person name="Batalov S."/>
            <person name="Forrest A.R."/>
            <person name="Zavolan M."/>
            <person name="Davis M.J."/>
            <person name="Wilming L.G."/>
            <person name="Aidinis V."/>
            <person name="Allen J.E."/>
            <person name="Ambesi-Impiombato A."/>
            <person name="Apweiler R."/>
            <person name="Aturaliya R.N."/>
            <person name="Bailey T.L."/>
            <person name="Bansal M."/>
            <person name="Baxter L."/>
            <person name="Beisel K.W."/>
            <person name="Bersano T."/>
            <person name="Bono H."/>
            <person name="Chalk A.M."/>
            <person name="Chiu K.P."/>
            <person name="Choudhary V."/>
            <person name="Christoffels A."/>
            <person name="Clutterbuck D.R."/>
            <person name="Crowe M.L."/>
            <person name="Dalla E."/>
            <person name="Dalrymple B.P."/>
            <person name="de Bono B."/>
            <person name="Della Gatta G."/>
            <person name="di Bernardo D."/>
            <person name="Down T."/>
            <person name="Engstrom P."/>
            <person name="Fagiolini M."/>
            <person name="Faulkner G."/>
            <person name="Fletcher C.F."/>
            <person name="Fukushima T."/>
            <person name="Furuno M."/>
            <person name="Futaki S."/>
            <person name="Gariboldi M."/>
            <person name="Georgii-Hemming P."/>
            <person name="Gingeras T.R."/>
            <person name="Gojobori T."/>
            <person name="Green R.E."/>
            <person name="Gustincich S."/>
            <person name="Harbers M."/>
            <person name="Hayashi Y."/>
            <person name="Hensch T.K."/>
            <person name="Hirokawa N."/>
            <person name="Hill D."/>
            <person name="Huminiecki L."/>
            <person name="Iacono M."/>
            <person name="Ikeo K."/>
            <person name="Iwama A."/>
            <person name="Ishikawa T."/>
            <person name="Jakt M."/>
            <person name="Kanapin A."/>
            <person name="Katoh M."/>
            <person name="Kawasawa Y."/>
            <person name="Kelso J."/>
            <person name="Kitamura H."/>
            <person name="Kitano H."/>
            <person name="Kollias G."/>
            <person name="Krishnan S.P."/>
            <person name="Kruger A."/>
            <person name="Kummerfeld S.K."/>
            <person name="Kurochkin I.V."/>
            <person name="Lareau L.F."/>
            <person name="Lazarevic D."/>
            <person name="Lipovich L."/>
            <person name="Liu J."/>
            <person name="Liuni S."/>
            <person name="McWilliam S."/>
            <person name="Madan Babu M."/>
            <person name="Madera M."/>
            <person name="Marchionni L."/>
            <person name="Matsuda H."/>
            <person name="Matsuzawa S."/>
            <person name="Miki H."/>
            <person name="Mignone F."/>
            <person name="Miyake S."/>
            <person name="Morris K."/>
            <person name="Mottagui-Tabar S."/>
            <person name="Mulder N."/>
            <person name="Nakano N."/>
            <person name="Nakauchi H."/>
            <person name="Ng P."/>
            <person name="Nilsson R."/>
            <person name="Nishiguchi S."/>
            <person name="Nishikawa S."/>
            <person name="Nori F."/>
            <person name="Ohara O."/>
            <person name="Okazaki Y."/>
            <person name="Orlando V."/>
            <person name="Pang K.C."/>
            <person name="Pavan W.J."/>
            <person name="Pavesi G."/>
            <person name="Pesole G."/>
            <person name="Petrovsky N."/>
            <person name="Piazza S."/>
            <person name="Reed J."/>
            <person name="Reid J.F."/>
            <person name="Ring B.Z."/>
            <person name="Ringwald M."/>
            <person name="Rost B."/>
            <person name="Ruan Y."/>
            <person name="Salzberg S.L."/>
            <person name="Sandelin A."/>
            <person name="Schneider C."/>
            <person name="Schoenbach C."/>
            <person name="Sekiguchi K."/>
            <person name="Semple C.A."/>
            <person name="Seno S."/>
            <person name="Sessa L."/>
            <person name="Sheng Y."/>
            <person name="Shibata Y."/>
            <person name="Shimada H."/>
            <person name="Shimada K."/>
            <person name="Silva D."/>
            <person name="Sinclair B."/>
            <person name="Sperling S."/>
            <person name="Stupka E."/>
            <person name="Sugiura K."/>
            <person name="Sultana R."/>
            <person name="Takenaka Y."/>
            <person name="Taki K."/>
            <person name="Tammoja K."/>
            <person name="Tan S.L."/>
            <person name="Tang S."/>
            <person name="Taylor M.S."/>
            <person name="Tegner J."/>
            <person name="Teichmann S.A."/>
            <person name="Ueda H.R."/>
            <person name="van Nimwegen E."/>
            <person name="Verardo R."/>
            <person name="Wei C.L."/>
            <person name="Yagi K."/>
            <person name="Yamanishi H."/>
            <person name="Zabarovsky E."/>
            <person name="Zhu S."/>
            <person name="Zimmer A."/>
            <person name="Hide W."/>
            <person name="Bult C."/>
            <person name="Grimmond S.M."/>
            <person name="Teasdale R.D."/>
            <person name="Liu E.T."/>
            <person name="Brusic V."/>
            <person name="Quackenbush J."/>
            <person name="Wahlestedt C."/>
            <person name="Mattick J.S."/>
            <person name="Hume D.A."/>
            <person name="Kai C."/>
            <person name="Sasaki D."/>
            <person name="Tomaru Y."/>
            <person name="Fukuda S."/>
            <person name="Kanamori-Katayama M."/>
            <person name="Suzuki M."/>
            <person name="Aoki J."/>
            <person name="Arakawa T."/>
            <person name="Iida J."/>
            <person name="Imamura K."/>
            <person name="Itoh M."/>
            <person name="Kato T."/>
            <person name="Kawaji H."/>
            <person name="Kawagashira N."/>
            <person name="Kawashima T."/>
            <person name="Kojima M."/>
            <person name="Kondo S."/>
            <person name="Konno H."/>
            <person name="Nakano K."/>
            <person name="Ninomiya N."/>
            <person name="Nishio T."/>
            <person name="Okada M."/>
            <person name="Plessy C."/>
            <person name="Shibata K."/>
            <person name="Shiraki T."/>
            <person name="Suzuki S."/>
            <person name="Tagami M."/>
            <person name="Waki K."/>
            <person name="Watahiki A."/>
            <person name="Okamura-Oho Y."/>
            <person name="Suzuki H."/>
            <person name="Kawai J."/>
            <person name="Hayashizaki Y."/>
        </authorList>
    </citation>
    <scope>NUCLEOTIDE SEQUENCE [LARGE SCALE MRNA]</scope>
    <source>
        <strain>C57BL/6J</strain>
        <tissue>Aorta</tissue>
        <tissue>Ovary</tissue>
    </source>
</reference>
<reference key="2">
    <citation type="journal article" date="2004" name="Genome Res.">
        <title>The status, quality, and expansion of the NIH full-length cDNA project: the Mammalian Gene Collection (MGC).</title>
        <authorList>
            <consortium name="The MGC Project Team"/>
        </authorList>
    </citation>
    <scope>NUCLEOTIDE SEQUENCE [LARGE SCALE MRNA]</scope>
    <source>
        <strain>C3H/He</strain>
        <tissue>Mesenchymal stem cell</tissue>
    </source>
</reference>
<reference key="3">
    <citation type="journal article" date="2010" name="Cell">
        <title>A tissue-specific atlas of mouse protein phosphorylation and expression.</title>
        <authorList>
            <person name="Huttlin E.L."/>
            <person name="Jedrychowski M.P."/>
            <person name="Elias J.E."/>
            <person name="Goswami T."/>
            <person name="Rad R."/>
            <person name="Beausoleil S.A."/>
            <person name="Villen J."/>
            <person name="Haas W."/>
            <person name="Sowa M.E."/>
            <person name="Gygi S.P."/>
        </authorList>
    </citation>
    <scope>IDENTIFICATION BY MASS SPECTROMETRY [LARGE SCALE ANALYSIS]</scope>
    <source>
        <tissue>Spleen</tissue>
    </source>
</reference>
<gene>
    <name type="primary">Rpp38</name>
</gene>
<dbReference type="EMBL" id="BC051448">
    <property type="protein sequence ID" value="AAH51448.1"/>
    <property type="molecule type" value="mRNA"/>
</dbReference>
<dbReference type="EMBL" id="AK087782">
    <property type="protein sequence ID" value="BAC40000.1"/>
    <property type="molecule type" value="mRNA"/>
</dbReference>
<dbReference type="EMBL" id="AK139023">
    <property type="protein sequence ID" value="BAE23865.1"/>
    <property type="molecule type" value="mRNA"/>
</dbReference>
<dbReference type="CCDS" id="CCDS15645.1"/>
<dbReference type="SMR" id="Q80UU2"/>
<dbReference type="FunCoup" id="Q80UU2">
    <property type="interactions" value="755"/>
</dbReference>
<dbReference type="STRING" id="10090.ENSMUSP00000050992"/>
<dbReference type="GlyGen" id="Q80UU2">
    <property type="glycosylation" value="1 site"/>
</dbReference>
<dbReference type="iPTMnet" id="Q80UU2"/>
<dbReference type="PhosphoSitePlus" id="Q80UU2"/>
<dbReference type="PaxDb" id="10090-ENSMUSP00000050992"/>
<dbReference type="ProteomicsDB" id="300486"/>
<dbReference type="Pumba" id="Q80UU2"/>
<dbReference type="AGR" id="MGI:2443607"/>
<dbReference type="MGI" id="MGI:2443607">
    <property type="gene designation" value="Rpp38"/>
</dbReference>
<dbReference type="eggNOG" id="KOG3387">
    <property type="taxonomic scope" value="Eukaryota"/>
</dbReference>
<dbReference type="InParanoid" id="Q80UU2"/>
<dbReference type="PhylomeDB" id="Q80UU2"/>
<dbReference type="Reactome" id="R-MMU-6791226">
    <property type="pathway name" value="Major pathway of rRNA processing in the nucleolus and cytosol"/>
</dbReference>
<dbReference type="PRO" id="PR:Q80UU2"/>
<dbReference type="Proteomes" id="UP000000589">
    <property type="component" value="Unplaced"/>
</dbReference>
<dbReference type="RNAct" id="Q80UU2">
    <property type="molecule type" value="protein"/>
</dbReference>
<dbReference type="GO" id="GO:0030681">
    <property type="term" value="C:multimeric ribonuclease P complex"/>
    <property type="evidence" value="ECO:0000250"/>
    <property type="project" value="UniProtKB"/>
</dbReference>
<dbReference type="GO" id="GO:0005655">
    <property type="term" value="C:nucleolar ribonuclease P complex"/>
    <property type="evidence" value="ECO:0007669"/>
    <property type="project" value="InterPro"/>
</dbReference>
<dbReference type="GO" id="GO:0005730">
    <property type="term" value="C:nucleolus"/>
    <property type="evidence" value="ECO:0000250"/>
    <property type="project" value="UniProtKB"/>
</dbReference>
<dbReference type="GO" id="GO:0000172">
    <property type="term" value="C:ribonuclease MRP complex"/>
    <property type="evidence" value="ECO:0007669"/>
    <property type="project" value="InterPro"/>
</dbReference>
<dbReference type="GO" id="GO:0004526">
    <property type="term" value="F:ribonuclease P activity"/>
    <property type="evidence" value="ECO:0007669"/>
    <property type="project" value="UniProtKB-EC"/>
</dbReference>
<dbReference type="GO" id="GO:0033204">
    <property type="term" value="F:ribonuclease P RNA binding"/>
    <property type="evidence" value="ECO:0000250"/>
    <property type="project" value="UniProtKB"/>
</dbReference>
<dbReference type="GO" id="GO:0006364">
    <property type="term" value="P:rRNA processing"/>
    <property type="evidence" value="ECO:0007669"/>
    <property type="project" value="UniProtKB-KW"/>
</dbReference>
<dbReference type="GO" id="GO:0001682">
    <property type="term" value="P:tRNA 5'-leader removal"/>
    <property type="evidence" value="ECO:0000250"/>
    <property type="project" value="UniProtKB"/>
</dbReference>
<dbReference type="Gene3D" id="3.30.1330.30">
    <property type="match status" value="1"/>
</dbReference>
<dbReference type="InterPro" id="IPR029064">
    <property type="entry name" value="Ribosomal_eL30-like_sf"/>
</dbReference>
<dbReference type="InterPro" id="IPR004038">
    <property type="entry name" value="Ribosomal_eL8/eL30/eS12/Gad45"/>
</dbReference>
<dbReference type="InterPro" id="IPR042848">
    <property type="entry name" value="Rpp38"/>
</dbReference>
<dbReference type="PANTHER" id="PTHR46948">
    <property type="entry name" value="RIBONUCLEASE P PROTEIN SUBUNIT P38"/>
    <property type="match status" value="1"/>
</dbReference>
<dbReference type="PANTHER" id="PTHR46948:SF1">
    <property type="entry name" value="RIBONUCLEASE P PROTEIN SUBUNIT P38"/>
    <property type="match status" value="1"/>
</dbReference>
<dbReference type="Pfam" id="PF01248">
    <property type="entry name" value="Ribosomal_L7Ae"/>
    <property type="match status" value="1"/>
</dbReference>
<dbReference type="SUPFAM" id="SSF55315">
    <property type="entry name" value="L30e-like"/>
    <property type="match status" value="1"/>
</dbReference>
<evidence type="ECO:0000250" key="1">
    <source>
        <dbReference type="UniProtKB" id="P78345"/>
    </source>
</evidence>
<evidence type="ECO:0000256" key="2">
    <source>
        <dbReference type="SAM" id="MobiDB-lite"/>
    </source>
</evidence>
<evidence type="ECO:0000305" key="3"/>